<dbReference type="EMBL" id="AE005176">
    <property type="protein sequence ID" value="AAK06165.1"/>
    <property type="molecule type" value="Genomic_DNA"/>
</dbReference>
<dbReference type="PIR" id="C86883">
    <property type="entry name" value="C86883"/>
</dbReference>
<dbReference type="RefSeq" id="NP_268224.1">
    <property type="nucleotide sequence ID" value="NC_002662.1"/>
</dbReference>
<dbReference type="RefSeq" id="WP_003130558.1">
    <property type="nucleotide sequence ID" value="NC_002662.1"/>
</dbReference>
<dbReference type="SMR" id="Q9CDY4"/>
<dbReference type="PaxDb" id="272623-L0413"/>
<dbReference type="EnsemblBacteria" id="AAK06165">
    <property type="protein sequence ID" value="AAK06165"/>
    <property type="gene ID" value="L0413"/>
</dbReference>
<dbReference type="GeneID" id="89634419"/>
<dbReference type="KEGG" id="lla:L0413"/>
<dbReference type="PATRIC" id="fig|272623.7.peg.2226"/>
<dbReference type="eggNOG" id="COG0203">
    <property type="taxonomic scope" value="Bacteria"/>
</dbReference>
<dbReference type="HOGENOM" id="CLU_074407_2_2_9"/>
<dbReference type="OrthoDB" id="9809073at2"/>
<dbReference type="Proteomes" id="UP000002196">
    <property type="component" value="Chromosome"/>
</dbReference>
<dbReference type="GO" id="GO:0022625">
    <property type="term" value="C:cytosolic large ribosomal subunit"/>
    <property type="evidence" value="ECO:0007669"/>
    <property type="project" value="TreeGrafter"/>
</dbReference>
<dbReference type="GO" id="GO:0003735">
    <property type="term" value="F:structural constituent of ribosome"/>
    <property type="evidence" value="ECO:0007669"/>
    <property type="project" value="InterPro"/>
</dbReference>
<dbReference type="GO" id="GO:0006412">
    <property type="term" value="P:translation"/>
    <property type="evidence" value="ECO:0007669"/>
    <property type="project" value="UniProtKB-UniRule"/>
</dbReference>
<dbReference type="FunFam" id="3.90.1030.10:FF:000002">
    <property type="entry name" value="50S ribosomal protein L17"/>
    <property type="match status" value="1"/>
</dbReference>
<dbReference type="Gene3D" id="3.90.1030.10">
    <property type="entry name" value="Ribosomal protein L17"/>
    <property type="match status" value="1"/>
</dbReference>
<dbReference type="HAMAP" id="MF_01368">
    <property type="entry name" value="Ribosomal_bL17"/>
    <property type="match status" value="1"/>
</dbReference>
<dbReference type="InterPro" id="IPR000456">
    <property type="entry name" value="Ribosomal_bL17"/>
</dbReference>
<dbReference type="InterPro" id="IPR047859">
    <property type="entry name" value="Ribosomal_bL17_CS"/>
</dbReference>
<dbReference type="InterPro" id="IPR036373">
    <property type="entry name" value="Ribosomal_bL17_sf"/>
</dbReference>
<dbReference type="NCBIfam" id="TIGR00059">
    <property type="entry name" value="L17"/>
    <property type="match status" value="1"/>
</dbReference>
<dbReference type="PANTHER" id="PTHR14413:SF16">
    <property type="entry name" value="LARGE RIBOSOMAL SUBUNIT PROTEIN BL17M"/>
    <property type="match status" value="1"/>
</dbReference>
<dbReference type="PANTHER" id="PTHR14413">
    <property type="entry name" value="RIBOSOMAL PROTEIN L17"/>
    <property type="match status" value="1"/>
</dbReference>
<dbReference type="Pfam" id="PF01196">
    <property type="entry name" value="Ribosomal_L17"/>
    <property type="match status" value="1"/>
</dbReference>
<dbReference type="SUPFAM" id="SSF64263">
    <property type="entry name" value="Prokaryotic ribosomal protein L17"/>
    <property type="match status" value="1"/>
</dbReference>
<dbReference type="PROSITE" id="PS01167">
    <property type="entry name" value="RIBOSOMAL_L17"/>
    <property type="match status" value="1"/>
</dbReference>
<keyword id="KW-1185">Reference proteome</keyword>
<keyword id="KW-0687">Ribonucleoprotein</keyword>
<keyword id="KW-0689">Ribosomal protein</keyword>
<reference key="1">
    <citation type="journal article" date="2001" name="Genome Res.">
        <title>The complete genome sequence of the lactic acid bacterium Lactococcus lactis ssp. lactis IL1403.</title>
        <authorList>
            <person name="Bolotin A."/>
            <person name="Wincker P."/>
            <person name="Mauger S."/>
            <person name="Jaillon O."/>
            <person name="Malarme K."/>
            <person name="Weissenbach J."/>
            <person name="Ehrlich S.D."/>
            <person name="Sorokin A."/>
        </authorList>
    </citation>
    <scope>NUCLEOTIDE SEQUENCE [LARGE SCALE GENOMIC DNA]</scope>
    <source>
        <strain>IL1403</strain>
    </source>
</reference>
<sequence>MSNRKLGRTSSQRKAMLRDLTTDLIINETIVTTEARAKEVRRTVEKMITLGKKGDLSARRAAAAYVRNEIAIKDFNEETETFPTALQKLFNDLAKRYEGRNGGYTRILKVEPRRGDAAPMAIIELV</sequence>
<feature type="chain" id="PRO_1000055853" description="Large ribosomal subunit protein bL17">
    <location>
        <begin position="1"/>
        <end position="126"/>
    </location>
</feature>
<name>RL17_LACLA</name>
<comment type="subunit">
    <text evidence="1">Part of the 50S ribosomal subunit. Contacts protein L32.</text>
</comment>
<comment type="similarity">
    <text evidence="1">Belongs to the bacterial ribosomal protein bL17 family.</text>
</comment>
<gene>
    <name evidence="1" type="primary">rplQ</name>
    <name type="ordered locus">LL2067</name>
    <name type="ORF">L0413</name>
</gene>
<accession>Q9CDY4</accession>
<organism>
    <name type="scientific">Lactococcus lactis subsp. lactis (strain IL1403)</name>
    <name type="common">Streptococcus lactis</name>
    <dbReference type="NCBI Taxonomy" id="272623"/>
    <lineage>
        <taxon>Bacteria</taxon>
        <taxon>Bacillati</taxon>
        <taxon>Bacillota</taxon>
        <taxon>Bacilli</taxon>
        <taxon>Lactobacillales</taxon>
        <taxon>Streptococcaceae</taxon>
        <taxon>Lactococcus</taxon>
    </lineage>
</organism>
<proteinExistence type="inferred from homology"/>
<evidence type="ECO:0000255" key="1">
    <source>
        <dbReference type="HAMAP-Rule" id="MF_01368"/>
    </source>
</evidence>
<evidence type="ECO:0000305" key="2"/>
<protein>
    <recommendedName>
        <fullName evidence="1">Large ribosomal subunit protein bL17</fullName>
    </recommendedName>
    <alternativeName>
        <fullName evidence="2">50S ribosomal protein L17</fullName>
    </alternativeName>
</protein>